<gene>
    <name evidence="1" type="primary">INTS14</name>
    <name evidence="1" type="synonym">VWA9</name>
</gene>
<evidence type="ECO:0000250" key="1">
    <source>
        <dbReference type="UniProtKB" id="Q96SY0"/>
    </source>
</evidence>
<evidence type="ECO:0000250" key="2">
    <source>
        <dbReference type="UniProtKB" id="Q9VPY0"/>
    </source>
</evidence>
<evidence type="ECO:0000305" key="3"/>
<name>INT14_BOVIN</name>
<proteinExistence type="evidence at transcript level"/>
<reference key="1">
    <citation type="journal article" date="2005" name="BMC Genomics">
        <title>Characterization of 954 bovine full-CDS cDNA sequences.</title>
        <authorList>
            <person name="Harhay G.P."/>
            <person name="Sonstegard T.S."/>
            <person name="Keele J.W."/>
            <person name="Heaton M.P."/>
            <person name="Clawson M.L."/>
            <person name="Snelling W.M."/>
            <person name="Wiedmann R.T."/>
            <person name="Van Tassell C.P."/>
            <person name="Smith T.P.L."/>
        </authorList>
    </citation>
    <scope>NUCLEOTIDE SEQUENCE [LARGE SCALE MRNA]</scope>
</reference>
<reference key="2">
    <citation type="submission" date="2006-01" db="EMBL/GenBank/DDBJ databases">
        <authorList>
            <consortium name="NIH - Mammalian Gene Collection (MGC) project"/>
        </authorList>
    </citation>
    <scope>NUCLEOTIDE SEQUENCE [LARGE SCALE MRNA]</scope>
    <source>
        <strain>Hereford</strain>
        <tissue>Hypothalamus</tissue>
    </source>
</reference>
<comment type="function">
    <text evidence="1">Component of the integrator complex, a multiprotein complex that terminates RNA polymerase II (Pol II) transcription in the promoter-proximal region of genes. The integrator complex provides a quality checkpoint during transcription elongation by driving premature transcription termination of transcripts that are unfavorably configured for transcriptional elongation: the complex terminates transcription by (1) catalyzing dephosphorylation of the C-terminal domain (CTD) of Pol II subunit POLR2A/RPB1 and SUPT5H/SPT5, (2) degrading the exiting nascent RNA transcript via endonuclease activity and (3) promoting the release of Pol II from bound DNA. The integrator complex is also involved in terminating the synthesis of non-coding Pol II transcripts, such as enhancer RNAs (eRNAs), small nuclear RNAs (snRNAs), telomerase RNAs and long non-coding RNAs (lncRNAs). Within the integrator complex, INTS14 is part of the integrator tail module that acts as a platform for the recruitment of transcription factors at promoters.</text>
</comment>
<comment type="subunit">
    <text evidence="1">Component of the Integrator complex, composed of core subunits INTS1, INTS2, INTS3, INTS4, INTS5, INTS6, INTS7, INTS8, INTS9/RC74, INTS10, INTS11/CPSF3L, INTS12, INTS13, INTS14 and INTS15. The core complex associates with protein phosphatase 2A subunits PPP2CA and PPP2R1A, to form the Integrator-PP2A (INTAC) complex. INTS14 is part of the tail subcomplex, composed of INTS10, INTS13, INTS14 and INTS15.</text>
</comment>
<comment type="subcellular location">
    <subcellularLocation>
        <location evidence="2">Nucleus</location>
    </subcellularLocation>
</comment>
<comment type="similarity">
    <text evidence="3">Belongs to the Integrator subunit 14 family.</text>
</comment>
<accession>Q5EA76</accession>
<sequence length="518" mass="57406">MPTVVVMDVSLSMTRPVSVEGSEEYQRKHLAAHGLTMLFEHMATNYKLEFTALVVFSSLWELMVPFTRDYNTLQEALSNMDDYDKTCLESALVGVCNIVQQEWGGAIPCQVVLVTDGCLGIGRGSLRHSLATHNQRGESNRFPLPFPFPSKLYIMCMANLEELQSTDSLDCLERLIDLNNGEGQIFTIDGPLCLKNVQSMFGKLIDLAYTPFHAVLKCGHLTADVQVFPRPEPFVIDEEIDPIPKVINTDLEIVGFIDIADISSPPVLSRHLVLPIALNKEGDEVGTGITDDNEDENSANQIAGKIPNFCVLLHGSLKVEGMVAIVQLGPEWHGMLYSQADSKKKSNLMMSLFEPGPEPLPWLGKMVQLGPISDAKENPYGEDDNKSPFPLQPKNKRSYAQNVTVWIKPSGLQTDVQKILRNARKLPEKTQTFYKELNRLRKAALAFGFLDLLKGVADMLERECTLLPDTAHPDAAFQLTHAAQQLKLASTGTSEYAGYDHNITPLQTDFSGSSAERI</sequence>
<protein>
    <recommendedName>
        <fullName evidence="1">Integrator complex subunit 14</fullName>
    </recommendedName>
    <alternativeName>
        <fullName evidence="1">von Willebrand factor A domain-containing protein 9</fullName>
    </alternativeName>
</protein>
<keyword id="KW-0007">Acetylation</keyword>
<keyword id="KW-0460">Magnesium</keyword>
<keyword id="KW-0479">Metal-binding</keyword>
<keyword id="KW-0539">Nucleus</keyword>
<keyword id="KW-1185">Reference proteome</keyword>
<feature type="chain" id="PRO_0000296267" description="Integrator complex subunit 14">
    <location>
        <begin position="1"/>
        <end position="518"/>
    </location>
</feature>
<feature type="domain" description="VWFA">
    <location>
        <begin position="2"/>
        <end position="204"/>
    </location>
</feature>
<feature type="binding site" evidence="1">
    <location>
        <position position="10"/>
    </location>
    <ligand>
        <name>Mg(2+)</name>
        <dbReference type="ChEBI" id="CHEBI:18420"/>
    </ligand>
</feature>
<feature type="binding site" evidence="1">
    <location>
        <position position="12"/>
    </location>
    <ligand>
        <name>Mg(2+)</name>
        <dbReference type="ChEBI" id="CHEBI:18420"/>
    </ligand>
</feature>
<feature type="binding site" evidence="1">
    <location>
        <position position="86"/>
    </location>
    <ligand>
        <name>Mg(2+)</name>
        <dbReference type="ChEBI" id="CHEBI:18420"/>
    </ligand>
</feature>
<feature type="modified residue" description="N6-acetyllysine" evidence="1">
    <location>
        <position position="418"/>
    </location>
</feature>
<organism>
    <name type="scientific">Bos taurus</name>
    <name type="common">Bovine</name>
    <dbReference type="NCBI Taxonomy" id="9913"/>
    <lineage>
        <taxon>Eukaryota</taxon>
        <taxon>Metazoa</taxon>
        <taxon>Chordata</taxon>
        <taxon>Craniata</taxon>
        <taxon>Vertebrata</taxon>
        <taxon>Euteleostomi</taxon>
        <taxon>Mammalia</taxon>
        <taxon>Eutheria</taxon>
        <taxon>Laurasiatheria</taxon>
        <taxon>Artiodactyla</taxon>
        <taxon>Ruminantia</taxon>
        <taxon>Pecora</taxon>
        <taxon>Bovidae</taxon>
        <taxon>Bovinae</taxon>
        <taxon>Bos</taxon>
    </lineage>
</organism>
<dbReference type="EMBL" id="BT020693">
    <property type="protein sequence ID" value="AAX08710.1"/>
    <property type="molecule type" value="mRNA"/>
</dbReference>
<dbReference type="EMBL" id="BC112684">
    <property type="protein sequence ID" value="AAI12685.1"/>
    <property type="molecule type" value="mRNA"/>
</dbReference>
<dbReference type="RefSeq" id="NP_001015652.1">
    <property type="nucleotide sequence ID" value="NM_001015652.3"/>
</dbReference>
<dbReference type="RefSeq" id="XP_005211402.1">
    <property type="nucleotide sequence ID" value="XM_005211345.5"/>
</dbReference>
<dbReference type="SMR" id="Q5EA76"/>
<dbReference type="FunCoup" id="Q5EA76">
    <property type="interactions" value="5533"/>
</dbReference>
<dbReference type="STRING" id="9913.ENSBTAP00000020164"/>
<dbReference type="PaxDb" id="9913-ENSBTAP00000020164"/>
<dbReference type="Ensembl" id="ENSBTAT00000020164.5">
    <property type="protein sequence ID" value="ENSBTAP00000020164.3"/>
    <property type="gene ID" value="ENSBTAG00000015158.5"/>
</dbReference>
<dbReference type="GeneID" id="534159"/>
<dbReference type="KEGG" id="bta:534159"/>
<dbReference type="CTD" id="81556"/>
<dbReference type="VEuPathDB" id="HostDB:ENSBTAG00000015158"/>
<dbReference type="VGNC" id="VGNC:30227">
    <property type="gene designation" value="INTS14"/>
</dbReference>
<dbReference type="eggNOG" id="ENOG502QQ37">
    <property type="taxonomic scope" value="Eukaryota"/>
</dbReference>
<dbReference type="GeneTree" id="ENSGT00390000009486"/>
<dbReference type="HOGENOM" id="CLU_041485_0_0_1"/>
<dbReference type="InParanoid" id="Q5EA76"/>
<dbReference type="OMA" id="QSSVVWI"/>
<dbReference type="OrthoDB" id="2374335at2759"/>
<dbReference type="TreeFam" id="TF323245"/>
<dbReference type="Reactome" id="R-BTA-6807505">
    <property type="pathway name" value="RNA polymerase II transcribes snRNA genes"/>
</dbReference>
<dbReference type="Proteomes" id="UP000009136">
    <property type="component" value="Chromosome 10"/>
</dbReference>
<dbReference type="Bgee" id="ENSBTAG00000015158">
    <property type="expression patterns" value="Expressed in semen and 108 other cell types or tissues"/>
</dbReference>
<dbReference type="GO" id="GO:0160232">
    <property type="term" value="C:INTAC complex"/>
    <property type="evidence" value="ECO:0000250"/>
    <property type="project" value="UniProtKB"/>
</dbReference>
<dbReference type="GO" id="GO:0032039">
    <property type="term" value="C:integrator complex"/>
    <property type="evidence" value="ECO:0007669"/>
    <property type="project" value="Ensembl"/>
</dbReference>
<dbReference type="GO" id="GO:0160240">
    <property type="term" value="P:RNA polymerase II transcription initiation surveillance"/>
    <property type="evidence" value="ECO:0000250"/>
    <property type="project" value="UniProtKB"/>
</dbReference>
<dbReference type="GO" id="GO:0034472">
    <property type="term" value="P:snRNA 3'-end processing"/>
    <property type="evidence" value="ECO:0000318"/>
    <property type="project" value="GO_Central"/>
</dbReference>
<dbReference type="FunFam" id="3.40.50.410:FF:000137">
    <property type="entry name" value="Integrator complex subunit 14"/>
    <property type="match status" value="1"/>
</dbReference>
<dbReference type="Gene3D" id="3.40.50.410">
    <property type="entry name" value="von Willebrand factor, type A domain"/>
    <property type="match status" value="1"/>
</dbReference>
<dbReference type="InterPro" id="IPR039841">
    <property type="entry name" value="INTS14"/>
</dbReference>
<dbReference type="InterPro" id="IPR045814">
    <property type="entry name" value="IntS14_b-barrel"/>
</dbReference>
<dbReference type="InterPro" id="IPR046471">
    <property type="entry name" value="IntS14_C"/>
</dbReference>
<dbReference type="InterPro" id="IPR002035">
    <property type="entry name" value="VWF_A"/>
</dbReference>
<dbReference type="InterPro" id="IPR036465">
    <property type="entry name" value="vWFA_dom_sf"/>
</dbReference>
<dbReference type="PANTHER" id="PTHR13532">
    <property type="match status" value="1"/>
</dbReference>
<dbReference type="PANTHER" id="PTHR13532:SF3">
    <property type="entry name" value="INTEGRATOR COMPLEX SUBUNIT 14"/>
    <property type="match status" value="1"/>
</dbReference>
<dbReference type="Pfam" id="PF19435">
    <property type="entry name" value="IntS14_b-barrel"/>
    <property type="match status" value="1"/>
</dbReference>
<dbReference type="Pfam" id="PF20504">
    <property type="entry name" value="IntS14_C"/>
    <property type="match status" value="1"/>
</dbReference>
<dbReference type="Pfam" id="PF13519">
    <property type="entry name" value="VWA_2"/>
    <property type="match status" value="1"/>
</dbReference>
<dbReference type="SUPFAM" id="SSF53300">
    <property type="entry name" value="vWA-like"/>
    <property type="match status" value="1"/>
</dbReference>